<feature type="chain" id="PRO_0000378541" description="Movement and RNA silencing protein">
    <location>
        <begin position="1"/>
        <end position="117"/>
    </location>
</feature>
<feature type="transmembrane region" description="Helical" evidence="1">
    <location>
        <begin position="15"/>
        <end position="35"/>
    </location>
</feature>
<feature type="region of interest" description="Disordered" evidence="2">
    <location>
        <begin position="83"/>
        <end position="117"/>
    </location>
</feature>
<proteinExistence type="predicted"/>
<name>MVP_BBTVA</name>
<comment type="function">
    <text evidence="4">Transports viral genome to neighboring plant cells directly through plasmosdesmata, without any budding. The movement protein allows efficient cell to cell propagation, by bypassing the host cell wall barrier. Begomovirus genome is shuttled out of nucleus by Nuclear shuttle protein (NSP) and the movement protein transports the DNA-NSP complex to cell plasmodesmata and facilitates further movement across the cell wall. Acts as a suppressor of RNA-mediated gene silencing, also known as post-transcriptional gene silencing (PTGS), a mechanism of plant viral defense that limits the accumulation of viral RNAs.</text>
</comment>
<comment type="subcellular location">
    <subcellularLocation>
        <location evidence="5">Host cell membrane</location>
        <topology evidence="5">Single-pass membrane protein</topology>
    </subcellularLocation>
    <text evidence="3">The hydrophobic region is responsible for the localization of the protein to the cell periphery.</text>
</comment>
<keyword id="KW-1032">Host cell membrane</keyword>
<keyword id="KW-1043">Host membrane</keyword>
<keyword id="KW-0945">Host-virus interaction</keyword>
<keyword id="KW-1090">Inhibition of host innate immune response by virus</keyword>
<keyword id="KW-0472">Membrane</keyword>
<keyword id="KW-1185">Reference proteome</keyword>
<keyword id="KW-0941">Suppressor of RNA silencing</keyword>
<keyword id="KW-0812">Transmembrane</keyword>
<keyword id="KW-1133">Transmembrane helix</keyword>
<keyword id="KW-0813">Transport</keyword>
<keyword id="KW-0899">Viral immunoevasion</keyword>
<keyword id="KW-0916">Viral movement protein</keyword>
<evidence type="ECO:0000255" key="1"/>
<evidence type="ECO:0000256" key="2">
    <source>
        <dbReference type="SAM" id="MobiDB-lite"/>
    </source>
</evidence>
<evidence type="ECO:0000269" key="3">
    <source>
    </source>
</evidence>
<evidence type="ECO:0000269" key="4">
    <source>
    </source>
</evidence>
<evidence type="ECO:0000305" key="5"/>
<dbReference type="EMBL" id="L41575">
    <property type="protein sequence ID" value="AAA87369.1"/>
    <property type="molecule type" value="Genomic_DNA"/>
</dbReference>
<dbReference type="RefSeq" id="NP_604478.1">
    <property type="nucleotide sequence ID" value="NC_003474.1"/>
</dbReference>
<dbReference type="SMR" id="Q65387"/>
<dbReference type="KEGG" id="vg:963868"/>
<dbReference type="Proteomes" id="UP000002339">
    <property type="component" value="Genome"/>
</dbReference>
<dbReference type="GO" id="GO:0020002">
    <property type="term" value="C:host cell plasma membrane"/>
    <property type="evidence" value="ECO:0007669"/>
    <property type="project" value="UniProtKB-SubCell"/>
</dbReference>
<dbReference type="GO" id="GO:0016020">
    <property type="term" value="C:membrane"/>
    <property type="evidence" value="ECO:0007669"/>
    <property type="project" value="UniProtKB-KW"/>
</dbReference>
<dbReference type="GO" id="GO:0106259">
    <property type="term" value="P:symbiont-mediated cell-to-cell migration in host"/>
    <property type="evidence" value="ECO:0000269"/>
    <property type="project" value="SigSci"/>
</dbReference>
<dbReference type="GO" id="GO:0052170">
    <property type="term" value="P:symbiont-mediated suppression of host innate immune response"/>
    <property type="evidence" value="ECO:0007669"/>
    <property type="project" value="UniProtKB-KW"/>
</dbReference>
<dbReference type="GO" id="GO:0046740">
    <property type="term" value="P:transport of virus in host, cell to cell"/>
    <property type="evidence" value="ECO:0007669"/>
    <property type="project" value="UniProtKB-KW"/>
</dbReference>
<dbReference type="InterPro" id="IPR009871">
    <property type="entry name" value="MP"/>
</dbReference>
<dbReference type="Pfam" id="PF07234">
    <property type="entry name" value="Babuvirus_MP"/>
    <property type="match status" value="1"/>
</dbReference>
<organism>
    <name type="scientific">Banana bunchy top virus (isolate Autralia)</name>
    <name type="common">BBTV</name>
    <dbReference type="NCBI Taxonomy" id="645099"/>
    <lineage>
        <taxon>Viruses</taxon>
        <taxon>Monodnaviria</taxon>
        <taxon>Shotokuvirae</taxon>
        <taxon>Cressdnaviricota</taxon>
        <taxon>Arfiviricetes</taxon>
        <taxon>Mulpavirales</taxon>
        <taxon>Nanoviridae</taxon>
        <taxon>Babuvirus</taxon>
        <taxon>Babuvirus musae</taxon>
        <taxon>Banana bunchy top virus</taxon>
    </lineage>
</organism>
<protein>
    <recommendedName>
        <fullName>Movement and RNA silencing protein</fullName>
        <shortName>MP</shortName>
    </recommendedName>
</protein>
<organismHost>
    <name type="scientific">Musa</name>
    <dbReference type="NCBI Taxonomy" id="4640"/>
</organismHost>
<reference key="1">
    <citation type="journal article" date="1995" name="J. Gen. Virol.">
        <title>The genome organization of banana bunchy top virus: analysis of six ssDNA components.</title>
        <authorList>
            <person name="Burns T.M."/>
            <person name="Harding R.M."/>
            <person name="Dale J.L."/>
        </authorList>
    </citation>
    <scope>NUCLEOTIDE SEQUENCE [GENOMIC DNA]</scope>
</reference>
<reference key="2">
    <citation type="journal article" date="2000" name="J. Gen. Virol.">
        <title>Functional analysis of proteins encoded by banana bunchy top virus DNA-4 to -6.</title>
        <authorList>
            <person name="Wanitchakorn R."/>
            <person name="Hafner G.J."/>
            <person name="Harding R.M."/>
            <person name="Dale J.L."/>
        </authorList>
    </citation>
    <scope>SUBCELLULAR LOCATION</scope>
</reference>
<reference key="3">
    <citation type="journal article" date="2009" name="Arch. Virol.">
        <title>Identification of two RNA silencing suppressors from banana bunchy top virus.</title>
        <authorList>
            <person name="Niu S."/>
            <person name="Wang B."/>
            <person name="Guo X."/>
            <person name="Yu J."/>
            <person name="Wang X."/>
            <person name="Xu K."/>
            <person name="Zhai Y."/>
            <person name="Wang J."/>
            <person name="Liu Z."/>
        </authorList>
    </citation>
    <scope>FUNCTION</scope>
</reference>
<accession>Q65387</accession>
<gene>
    <name type="primary">DNA-M</name>
    <name type="synonym">C4</name>
</gene>
<sequence length="117" mass="13739">MALTTERVKLFFEWFLFFGAIFIAITILYILLVLLFEVPRYIKELVRCLVEYLTRRRVWMQRTQLTEATGDVEIGRGIVEDRRDQEPAVIPHVSQVIPSQPNRRDDQGRRGNAGPMF</sequence>